<feature type="chain" id="PRO_1000127850" description="ATP synthase epsilon chain">
    <location>
        <begin position="1"/>
        <end position="139"/>
    </location>
</feature>
<keyword id="KW-0066">ATP synthesis</keyword>
<keyword id="KW-0997">Cell inner membrane</keyword>
<keyword id="KW-1003">Cell membrane</keyword>
<keyword id="KW-0139">CF(1)</keyword>
<keyword id="KW-0375">Hydrogen ion transport</keyword>
<keyword id="KW-0406">Ion transport</keyword>
<keyword id="KW-0472">Membrane</keyword>
<keyword id="KW-0813">Transport</keyword>
<gene>
    <name evidence="1" type="primary">atpC</name>
    <name type="ordered locus">ECH74115_5167</name>
</gene>
<reference key="1">
    <citation type="journal article" date="2011" name="Proc. Natl. Acad. Sci. U.S.A.">
        <title>Genomic anatomy of Escherichia coli O157:H7 outbreaks.</title>
        <authorList>
            <person name="Eppinger M."/>
            <person name="Mammel M.K."/>
            <person name="Leclerc J.E."/>
            <person name="Ravel J."/>
            <person name="Cebula T.A."/>
        </authorList>
    </citation>
    <scope>NUCLEOTIDE SEQUENCE [LARGE SCALE GENOMIC DNA]</scope>
    <source>
        <strain>EC4115 / EHEC</strain>
    </source>
</reference>
<comment type="function">
    <text evidence="1">Produces ATP from ADP in the presence of a proton gradient across the membrane.</text>
</comment>
<comment type="subunit">
    <text evidence="1">F-type ATPases have 2 components, CF(1) - the catalytic core - and CF(0) - the membrane proton channel. CF(1) has five subunits: alpha(3), beta(3), gamma(1), delta(1), epsilon(1). CF(0) has three main subunits: a, b and c.</text>
</comment>
<comment type="subcellular location">
    <subcellularLocation>
        <location evidence="1">Cell inner membrane</location>
        <topology evidence="1">Peripheral membrane protein</topology>
    </subcellularLocation>
</comment>
<comment type="similarity">
    <text evidence="1">Belongs to the ATPase epsilon chain family.</text>
</comment>
<sequence length="139" mass="15068">MAMTYHLDVVSAEQQMFSGLVEKIQVTGSEGELGIYPGHAPLLTAIKPGMIRIVKQHGHEEFIYLSGGILEVQPGNVTVLADTAIRGQDLDEARAMEAKRKAEEHISSSHGDVDYAQASAELAKAIAQLRVIELTKKAM</sequence>
<evidence type="ECO:0000255" key="1">
    <source>
        <dbReference type="HAMAP-Rule" id="MF_00530"/>
    </source>
</evidence>
<proteinExistence type="inferred from homology"/>
<accession>B5YXD5</accession>
<protein>
    <recommendedName>
        <fullName evidence="1">ATP synthase epsilon chain</fullName>
    </recommendedName>
    <alternativeName>
        <fullName evidence="1">ATP synthase F1 sector epsilon subunit</fullName>
    </alternativeName>
    <alternativeName>
        <fullName evidence="1">F-ATPase epsilon subunit</fullName>
    </alternativeName>
</protein>
<organism>
    <name type="scientific">Escherichia coli O157:H7 (strain EC4115 / EHEC)</name>
    <dbReference type="NCBI Taxonomy" id="444450"/>
    <lineage>
        <taxon>Bacteria</taxon>
        <taxon>Pseudomonadati</taxon>
        <taxon>Pseudomonadota</taxon>
        <taxon>Gammaproteobacteria</taxon>
        <taxon>Enterobacterales</taxon>
        <taxon>Enterobacteriaceae</taxon>
        <taxon>Escherichia</taxon>
    </lineage>
</organism>
<dbReference type="EMBL" id="CP001164">
    <property type="protein sequence ID" value="ACI38463.1"/>
    <property type="molecule type" value="Genomic_DNA"/>
</dbReference>
<dbReference type="RefSeq" id="WP_001251965.1">
    <property type="nucleotide sequence ID" value="NC_011353.1"/>
</dbReference>
<dbReference type="SMR" id="B5YXD5"/>
<dbReference type="KEGG" id="ecf:ECH74115_5167"/>
<dbReference type="HOGENOM" id="CLU_084338_2_0_6"/>
<dbReference type="GO" id="GO:0005886">
    <property type="term" value="C:plasma membrane"/>
    <property type="evidence" value="ECO:0007669"/>
    <property type="project" value="UniProtKB-SubCell"/>
</dbReference>
<dbReference type="GO" id="GO:0045259">
    <property type="term" value="C:proton-transporting ATP synthase complex"/>
    <property type="evidence" value="ECO:0007669"/>
    <property type="project" value="UniProtKB-KW"/>
</dbReference>
<dbReference type="GO" id="GO:0005524">
    <property type="term" value="F:ATP binding"/>
    <property type="evidence" value="ECO:0007669"/>
    <property type="project" value="UniProtKB-UniRule"/>
</dbReference>
<dbReference type="GO" id="GO:0046933">
    <property type="term" value="F:proton-transporting ATP synthase activity, rotational mechanism"/>
    <property type="evidence" value="ECO:0007669"/>
    <property type="project" value="UniProtKB-UniRule"/>
</dbReference>
<dbReference type="CDD" id="cd12152">
    <property type="entry name" value="F1-ATPase_delta"/>
    <property type="match status" value="1"/>
</dbReference>
<dbReference type="FunFam" id="1.20.5.440:FF:000001">
    <property type="entry name" value="ATP synthase epsilon chain"/>
    <property type="match status" value="1"/>
</dbReference>
<dbReference type="FunFam" id="2.60.15.10:FF:000001">
    <property type="entry name" value="ATP synthase epsilon chain"/>
    <property type="match status" value="1"/>
</dbReference>
<dbReference type="Gene3D" id="1.20.5.440">
    <property type="entry name" value="ATP synthase delta/epsilon subunit, C-terminal domain"/>
    <property type="match status" value="1"/>
</dbReference>
<dbReference type="Gene3D" id="2.60.15.10">
    <property type="entry name" value="F0F1 ATP synthase delta/epsilon subunit, N-terminal"/>
    <property type="match status" value="1"/>
</dbReference>
<dbReference type="HAMAP" id="MF_00530">
    <property type="entry name" value="ATP_synth_epsil_bac"/>
    <property type="match status" value="1"/>
</dbReference>
<dbReference type="InterPro" id="IPR036794">
    <property type="entry name" value="ATP_F1_dsu/esu_C_sf"/>
</dbReference>
<dbReference type="InterPro" id="IPR001469">
    <property type="entry name" value="ATP_synth_F1_dsu/esu"/>
</dbReference>
<dbReference type="InterPro" id="IPR020546">
    <property type="entry name" value="ATP_synth_F1_dsu/esu_N"/>
</dbReference>
<dbReference type="InterPro" id="IPR020547">
    <property type="entry name" value="ATP_synth_F1_esu_C"/>
</dbReference>
<dbReference type="InterPro" id="IPR036771">
    <property type="entry name" value="ATPsynth_dsu/esu_N"/>
</dbReference>
<dbReference type="NCBIfam" id="TIGR01216">
    <property type="entry name" value="ATP_synt_epsi"/>
    <property type="match status" value="1"/>
</dbReference>
<dbReference type="NCBIfam" id="NF001847">
    <property type="entry name" value="PRK00571.1-4"/>
    <property type="match status" value="1"/>
</dbReference>
<dbReference type="PANTHER" id="PTHR13822">
    <property type="entry name" value="ATP SYNTHASE DELTA/EPSILON CHAIN"/>
    <property type="match status" value="1"/>
</dbReference>
<dbReference type="PANTHER" id="PTHR13822:SF10">
    <property type="entry name" value="ATP SYNTHASE EPSILON CHAIN, CHLOROPLASTIC"/>
    <property type="match status" value="1"/>
</dbReference>
<dbReference type="Pfam" id="PF00401">
    <property type="entry name" value="ATP-synt_DE"/>
    <property type="match status" value="1"/>
</dbReference>
<dbReference type="Pfam" id="PF02823">
    <property type="entry name" value="ATP-synt_DE_N"/>
    <property type="match status" value="1"/>
</dbReference>
<dbReference type="SUPFAM" id="SSF46604">
    <property type="entry name" value="Epsilon subunit of F1F0-ATP synthase C-terminal domain"/>
    <property type="match status" value="1"/>
</dbReference>
<dbReference type="SUPFAM" id="SSF51344">
    <property type="entry name" value="Epsilon subunit of F1F0-ATP synthase N-terminal domain"/>
    <property type="match status" value="1"/>
</dbReference>
<name>ATPE_ECO5E</name>